<keyword id="KW-0687">Ribonucleoprotein</keyword>
<keyword id="KW-0689">Ribosomal protein</keyword>
<keyword id="KW-0694">RNA-binding</keyword>
<keyword id="KW-0699">rRNA-binding</keyword>
<proteinExistence type="inferred from homology"/>
<accession>C5CP48</accession>
<comment type="function">
    <text evidence="1">This protein binds specifically to 23S rRNA; its binding is stimulated by other ribosomal proteins, e.g. L4, L17, and L20. It is important during the early stages of 50S assembly. It makes multiple contacts with different domains of the 23S rRNA in the assembled 50S subunit and ribosome (By similarity).</text>
</comment>
<comment type="function">
    <text evidence="1">The globular domain of the protein is located near the polypeptide exit tunnel on the outside of the subunit, while an extended beta-hairpin is found that lines the wall of the exit tunnel in the center of the 70S ribosome.</text>
</comment>
<comment type="subunit">
    <text evidence="1">Part of the 50S ribosomal subunit.</text>
</comment>
<comment type="similarity">
    <text evidence="1">Belongs to the universal ribosomal protein uL22 family.</text>
</comment>
<feature type="chain" id="PRO_1000214618" description="Large ribosomal subunit protein uL22">
    <location>
        <begin position="1"/>
        <end position="110"/>
    </location>
</feature>
<dbReference type="EMBL" id="CP001635">
    <property type="protein sequence ID" value="ACS21512.1"/>
    <property type="molecule type" value="Genomic_DNA"/>
</dbReference>
<dbReference type="SMR" id="C5CP48"/>
<dbReference type="STRING" id="543728.Vapar_4908"/>
<dbReference type="KEGG" id="vap:Vapar_4908"/>
<dbReference type="eggNOG" id="COG0091">
    <property type="taxonomic scope" value="Bacteria"/>
</dbReference>
<dbReference type="HOGENOM" id="CLU_083987_3_3_4"/>
<dbReference type="OrthoDB" id="9805969at2"/>
<dbReference type="GO" id="GO:0022625">
    <property type="term" value="C:cytosolic large ribosomal subunit"/>
    <property type="evidence" value="ECO:0007669"/>
    <property type="project" value="TreeGrafter"/>
</dbReference>
<dbReference type="GO" id="GO:0019843">
    <property type="term" value="F:rRNA binding"/>
    <property type="evidence" value="ECO:0007669"/>
    <property type="project" value="UniProtKB-UniRule"/>
</dbReference>
<dbReference type="GO" id="GO:0003735">
    <property type="term" value="F:structural constituent of ribosome"/>
    <property type="evidence" value="ECO:0007669"/>
    <property type="project" value="InterPro"/>
</dbReference>
<dbReference type="GO" id="GO:0006412">
    <property type="term" value="P:translation"/>
    <property type="evidence" value="ECO:0007669"/>
    <property type="project" value="UniProtKB-UniRule"/>
</dbReference>
<dbReference type="CDD" id="cd00336">
    <property type="entry name" value="Ribosomal_L22"/>
    <property type="match status" value="1"/>
</dbReference>
<dbReference type="FunFam" id="3.90.470.10:FF:000001">
    <property type="entry name" value="50S ribosomal protein L22"/>
    <property type="match status" value="1"/>
</dbReference>
<dbReference type="Gene3D" id="3.90.470.10">
    <property type="entry name" value="Ribosomal protein L22/L17"/>
    <property type="match status" value="1"/>
</dbReference>
<dbReference type="HAMAP" id="MF_01331_B">
    <property type="entry name" value="Ribosomal_uL22_B"/>
    <property type="match status" value="1"/>
</dbReference>
<dbReference type="InterPro" id="IPR001063">
    <property type="entry name" value="Ribosomal_uL22"/>
</dbReference>
<dbReference type="InterPro" id="IPR005727">
    <property type="entry name" value="Ribosomal_uL22_bac/chlpt-type"/>
</dbReference>
<dbReference type="InterPro" id="IPR047867">
    <property type="entry name" value="Ribosomal_uL22_bac/org-type"/>
</dbReference>
<dbReference type="InterPro" id="IPR018260">
    <property type="entry name" value="Ribosomal_uL22_CS"/>
</dbReference>
<dbReference type="InterPro" id="IPR036394">
    <property type="entry name" value="Ribosomal_uL22_sf"/>
</dbReference>
<dbReference type="NCBIfam" id="TIGR01044">
    <property type="entry name" value="rplV_bact"/>
    <property type="match status" value="1"/>
</dbReference>
<dbReference type="PANTHER" id="PTHR13501">
    <property type="entry name" value="CHLOROPLAST 50S RIBOSOMAL PROTEIN L22-RELATED"/>
    <property type="match status" value="1"/>
</dbReference>
<dbReference type="PANTHER" id="PTHR13501:SF8">
    <property type="entry name" value="LARGE RIBOSOMAL SUBUNIT PROTEIN UL22M"/>
    <property type="match status" value="1"/>
</dbReference>
<dbReference type="Pfam" id="PF00237">
    <property type="entry name" value="Ribosomal_L22"/>
    <property type="match status" value="1"/>
</dbReference>
<dbReference type="SUPFAM" id="SSF54843">
    <property type="entry name" value="Ribosomal protein L22"/>
    <property type="match status" value="1"/>
</dbReference>
<dbReference type="PROSITE" id="PS00464">
    <property type="entry name" value="RIBOSOMAL_L22"/>
    <property type="match status" value="1"/>
</dbReference>
<name>RL22_VARPS</name>
<sequence length="110" mass="12072">MSETRAVLRGVRLSVDKGRLVADLIRGKKVDQALNVLQFTQKKAAVIIKKVLESAIANAEHNDGADIDELKVKTIYVEQGATLKRFTARAKGRGNRISKPTCHVYVTVGN</sequence>
<organism>
    <name type="scientific">Variovorax paradoxus (strain S110)</name>
    <dbReference type="NCBI Taxonomy" id="543728"/>
    <lineage>
        <taxon>Bacteria</taxon>
        <taxon>Pseudomonadati</taxon>
        <taxon>Pseudomonadota</taxon>
        <taxon>Betaproteobacteria</taxon>
        <taxon>Burkholderiales</taxon>
        <taxon>Comamonadaceae</taxon>
        <taxon>Variovorax</taxon>
    </lineage>
</organism>
<reference key="1">
    <citation type="journal article" date="2011" name="J. Bacteriol.">
        <title>Complete genome sequence of the metabolically versatile plant growth-promoting endophyte, Variovorax paradoxus S110.</title>
        <authorList>
            <person name="Han J.I."/>
            <person name="Choi H.K."/>
            <person name="Lee S.W."/>
            <person name="Orwin P.M."/>
            <person name="Kim J."/>
            <person name="Laroe S.L."/>
            <person name="Kim T.G."/>
            <person name="O'Neil J."/>
            <person name="Leadbetter J.R."/>
            <person name="Lee S.Y."/>
            <person name="Hur C.G."/>
            <person name="Spain J.C."/>
            <person name="Ovchinnikova G."/>
            <person name="Goodwin L."/>
            <person name="Han C."/>
        </authorList>
    </citation>
    <scope>NUCLEOTIDE SEQUENCE [LARGE SCALE GENOMIC DNA]</scope>
    <source>
        <strain>S110</strain>
    </source>
</reference>
<protein>
    <recommendedName>
        <fullName evidence="1">Large ribosomal subunit protein uL22</fullName>
    </recommendedName>
    <alternativeName>
        <fullName evidence="2">50S ribosomal protein L22</fullName>
    </alternativeName>
</protein>
<gene>
    <name evidence="1" type="primary">rplV</name>
    <name type="ordered locus">Vapar_4908</name>
</gene>
<evidence type="ECO:0000255" key="1">
    <source>
        <dbReference type="HAMAP-Rule" id="MF_01331"/>
    </source>
</evidence>
<evidence type="ECO:0000305" key="2"/>